<feature type="chain" id="PRO_1000146367" description="Small ribosomal subunit protein uS19">
    <location>
        <begin position="1"/>
        <end position="92"/>
    </location>
</feature>
<protein>
    <recommendedName>
        <fullName evidence="1">Small ribosomal subunit protein uS19</fullName>
    </recommendedName>
    <alternativeName>
        <fullName evidence="2">30S ribosomal protein S19</fullName>
    </alternativeName>
</protein>
<name>RS19_BACCQ</name>
<reference key="1">
    <citation type="journal article" date="2009" name="J. Bacteriol.">
        <title>Complete genome sequence of the extremophilic Bacillus cereus strain Q1 with industrial applications.</title>
        <authorList>
            <person name="Xiong Z."/>
            <person name="Jiang Y."/>
            <person name="Qi D."/>
            <person name="Lu H."/>
            <person name="Yang F."/>
            <person name="Yang J."/>
            <person name="Chen L."/>
            <person name="Sun L."/>
            <person name="Xu X."/>
            <person name="Xue Y."/>
            <person name="Zhu Y."/>
            <person name="Jin Q."/>
        </authorList>
    </citation>
    <scope>NUCLEOTIDE SEQUENCE [LARGE SCALE GENOMIC DNA]</scope>
    <source>
        <strain>Q1</strain>
    </source>
</reference>
<sequence>MARSLKKGPFVDDHLMSKIAKLNETEQKQVVKTWSRRSTIFPQFIGHTIAVYDGRKHVPVYVTEDMVGHKLGEFAPTRTYKGHDADDKKTRR</sequence>
<accession>B9IZJ8</accession>
<gene>
    <name evidence="1" type="primary">rpsS</name>
    <name type="ordered locus">BCQ_0127</name>
</gene>
<proteinExistence type="inferred from homology"/>
<organism>
    <name type="scientific">Bacillus cereus (strain Q1)</name>
    <dbReference type="NCBI Taxonomy" id="361100"/>
    <lineage>
        <taxon>Bacteria</taxon>
        <taxon>Bacillati</taxon>
        <taxon>Bacillota</taxon>
        <taxon>Bacilli</taxon>
        <taxon>Bacillales</taxon>
        <taxon>Bacillaceae</taxon>
        <taxon>Bacillus</taxon>
        <taxon>Bacillus cereus group</taxon>
    </lineage>
</organism>
<keyword id="KW-0687">Ribonucleoprotein</keyword>
<keyword id="KW-0689">Ribosomal protein</keyword>
<keyword id="KW-0694">RNA-binding</keyword>
<keyword id="KW-0699">rRNA-binding</keyword>
<comment type="function">
    <text evidence="1">Protein S19 forms a complex with S13 that binds strongly to the 16S ribosomal RNA.</text>
</comment>
<comment type="similarity">
    <text evidence="1">Belongs to the universal ribosomal protein uS19 family.</text>
</comment>
<dbReference type="EMBL" id="CP000227">
    <property type="protein sequence ID" value="ACM10642.1"/>
    <property type="molecule type" value="Genomic_DNA"/>
</dbReference>
<dbReference type="SMR" id="B9IZJ8"/>
<dbReference type="KEGG" id="bcq:BCQ_0127"/>
<dbReference type="HOGENOM" id="CLU_144911_0_1_9"/>
<dbReference type="Proteomes" id="UP000000441">
    <property type="component" value="Chromosome"/>
</dbReference>
<dbReference type="GO" id="GO:0005737">
    <property type="term" value="C:cytoplasm"/>
    <property type="evidence" value="ECO:0007669"/>
    <property type="project" value="UniProtKB-ARBA"/>
</dbReference>
<dbReference type="GO" id="GO:0015935">
    <property type="term" value="C:small ribosomal subunit"/>
    <property type="evidence" value="ECO:0007669"/>
    <property type="project" value="InterPro"/>
</dbReference>
<dbReference type="GO" id="GO:0019843">
    <property type="term" value="F:rRNA binding"/>
    <property type="evidence" value="ECO:0007669"/>
    <property type="project" value="UniProtKB-UniRule"/>
</dbReference>
<dbReference type="GO" id="GO:0003735">
    <property type="term" value="F:structural constituent of ribosome"/>
    <property type="evidence" value="ECO:0007669"/>
    <property type="project" value="InterPro"/>
</dbReference>
<dbReference type="GO" id="GO:0000028">
    <property type="term" value="P:ribosomal small subunit assembly"/>
    <property type="evidence" value="ECO:0007669"/>
    <property type="project" value="TreeGrafter"/>
</dbReference>
<dbReference type="GO" id="GO:0006412">
    <property type="term" value="P:translation"/>
    <property type="evidence" value="ECO:0007669"/>
    <property type="project" value="UniProtKB-UniRule"/>
</dbReference>
<dbReference type="FunFam" id="3.30.860.10:FF:000001">
    <property type="entry name" value="30S ribosomal protein S19"/>
    <property type="match status" value="1"/>
</dbReference>
<dbReference type="Gene3D" id="3.30.860.10">
    <property type="entry name" value="30s Ribosomal Protein S19, Chain A"/>
    <property type="match status" value="1"/>
</dbReference>
<dbReference type="HAMAP" id="MF_00531">
    <property type="entry name" value="Ribosomal_uS19"/>
    <property type="match status" value="1"/>
</dbReference>
<dbReference type="InterPro" id="IPR002222">
    <property type="entry name" value="Ribosomal_uS19"/>
</dbReference>
<dbReference type="InterPro" id="IPR005732">
    <property type="entry name" value="Ribosomal_uS19_bac-type"/>
</dbReference>
<dbReference type="InterPro" id="IPR020934">
    <property type="entry name" value="Ribosomal_uS19_CS"/>
</dbReference>
<dbReference type="InterPro" id="IPR023575">
    <property type="entry name" value="Ribosomal_uS19_SF"/>
</dbReference>
<dbReference type="NCBIfam" id="TIGR01050">
    <property type="entry name" value="rpsS_bact"/>
    <property type="match status" value="1"/>
</dbReference>
<dbReference type="PANTHER" id="PTHR11880">
    <property type="entry name" value="RIBOSOMAL PROTEIN S19P FAMILY MEMBER"/>
    <property type="match status" value="1"/>
</dbReference>
<dbReference type="PANTHER" id="PTHR11880:SF8">
    <property type="entry name" value="SMALL RIBOSOMAL SUBUNIT PROTEIN US19M"/>
    <property type="match status" value="1"/>
</dbReference>
<dbReference type="Pfam" id="PF00203">
    <property type="entry name" value="Ribosomal_S19"/>
    <property type="match status" value="1"/>
</dbReference>
<dbReference type="PIRSF" id="PIRSF002144">
    <property type="entry name" value="Ribosomal_S19"/>
    <property type="match status" value="1"/>
</dbReference>
<dbReference type="PRINTS" id="PR00975">
    <property type="entry name" value="RIBOSOMALS19"/>
</dbReference>
<dbReference type="SUPFAM" id="SSF54570">
    <property type="entry name" value="Ribosomal protein S19"/>
    <property type="match status" value="1"/>
</dbReference>
<dbReference type="PROSITE" id="PS00323">
    <property type="entry name" value="RIBOSOMAL_S19"/>
    <property type="match status" value="1"/>
</dbReference>
<evidence type="ECO:0000255" key="1">
    <source>
        <dbReference type="HAMAP-Rule" id="MF_00531"/>
    </source>
</evidence>
<evidence type="ECO:0000305" key="2"/>